<protein>
    <recommendedName>
        <fullName evidence="1">Probable nicotinate-nucleotide adenylyltransferase</fullName>
        <ecNumber evidence="1">2.7.7.18</ecNumber>
    </recommendedName>
    <alternativeName>
        <fullName evidence="1">Deamido-NAD(+) diphosphorylase</fullName>
    </alternativeName>
    <alternativeName>
        <fullName evidence="1">Deamido-NAD(+) pyrophosphorylase</fullName>
    </alternativeName>
    <alternativeName>
        <fullName evidence="1">Nicotinate mononucleotide adenylyltransferase</fullName>
        <shortName evidence="1">NaMN adenylyltransferase</shortName>
    </alternativeName>
</protein>
<name>NADD_HERA2</name>
<organism>
    <name type="scientific">Herpetosiphon aurantiacus (strain ATCC 23779 / DSM 785 / 114-95)</name>
    <dbReference type="NCBI Taxonomy" id="316274"/>
    <lineage>
        <taxon>Bacteria</taxon>
        <taxon>Bacillati</taxon>
        <taxon>Chloroflexota</taxon>
        <taxon>Chloroflexia</taxon>
        <taxon>Herpetosiphonales</taxon>
        <taxon>Herpetosiphonaceae</taxon>
        <taxon>Herpetosiphon</taxon>
    </lineage>
</organism>
<proteinExistence type="inferred from homology"/>
<accession>A9AXY4</accession>
<sequence>MQRVGILGGTFDPIHFAHLAIAEEARVVLGLSQVVFIPTAQQPLKQQHFSSAYQRLAMTKLAIADNPAFSVSTIEVERSGVSYTIDTIQTLHQDQPHIEWWLIVGSDSLATLSRWHAAHDLVQLAHFAILERPGFELDWPALLDQFPELAKRSVRIQGPRMDLSATELRSRLQAGLPVRYLVPDAVASYIAQQQLYLA</sequence>
<dbReference type="EC" id="2.7.7.18" evidence="1"/>
<dbReference type="EMBL" id="CP000875">
    <property type="protein sequence ID" value="ABX04950.1"/>
    <property type="molecule type" value="Genomic_DNA"/>
</dbReference>
<dbReference type="SMR" id="A9AXY4"/>
<dbReference type="FunCoup" id="A9AXY4">
    <property type="interactions" value="397"/>
</dbReference>
<dbReference type="STRING" id="316274.Haur_2310"/>
<dbReference type="KEGG" id="hau:Haur_2310"/>
<dbReference type="eggNOG" id="COG1057">
    <property type="taxonomic scope" value="Bacteria"/>
</dbReference>
<dbReference type="HOGENOM" id="CLU_069765_3_1_0"/>
<dbReference type="InParanoid" id="A9AXY4"/>
<dbReference type="UniPathway" id="UPA00253">
    <property type="reaction ID" value="UER00332"/>
</dbReference>
<dbReference type="Proteomes" id="UP000000787">
    <property type="component" value="Chromosome"/>
</dbReference>
<dbReference type="GO" id="GO:0005524">
    <property type="term" value="F:ATP binding"/>
    <property type="evidence" value="ECO:0007669"/>
    <property type="project" value="UniProtKB-KW"/>
</dbReference>
<dbReference type="GO" id="GO:0004515">
    <property type="term" value="F:nicotinate-nucleotide adenylyltransferase activity"/>
    <property type="evidence" value="ECO:0007669"/>
    <property type="project" value="UniProtKB-UniRule"/>
</dbReference>
<dbReference type="GO" id="GO:0009435">
    <property type="term" value="P:NAD biosynthetic process"/>
    <property type="evidence" value="ECO:0007669"/>
    <property type="project" value="UniProtKB-UniRule"/>
</dbReference>
<dbReference type="CDD" id="cd02165">
    <property type="entry name" value="NMNAT"/>
    <property type="match status" value="1"/>
</dbReference>
<dbReference type="Gene3D" id="3.40.50.620">
    <property type="entry name" value="HUPs"/>
    <property type="match status" value="1"/>
</dbReference>
<dbReference type="HAMAP" id="MF_00244">
    <property type="entry name" value="NaMN_adenylyltr"/>
    <property type="match status" value="1"/>
</dbReference>
<dbReference type="InterPro" id="IPR004821">
    <property type="entry name" value="Cyt_trans-like"/>
</dbReference>
<dbReference type="InterPro" id="IPR005248">
    <property type="entry name" value="NadD/NMNAT"/>
</dbReference>
<dbReference type="InterPro" id="IPR014729">
    <property type="entry name" value="Rossmann-like_a/b/a_fold"/>
</dbReference>
<dbReference type="NCBIfam" id="TIGR00125">
    <property type="entry name" value="cyt_tran_rel"/>
    <property type="match status" value="1"/>
</dbReference>
<dbReference type="NCBIfam" id="TIGR00482">
    <property type="entry name" value="nicotinate (nicotinamide) nucleotide adenylyltransferase"/>
    <property type="match status" value="1"/>
</dbReference>
<dbReference type="NCBIfam" id="NF000840">
    <property type="entry name" value="PRK00071.1-3"/>
    <property type="match status" value="1"/>
</dbReference>
<dbReference type="PANTHER" id="PTHR39321">
    <property type="entry name" value="NICOTINATE-NUCLEOTIDE ADENYLYLTRANSFERASE-RELATED"/>
    <property type="match status" value="1"/>
</dbReference>
<dbReference type="PANTHER" id="PTHR39321:SF3">
    <property type="entry name" value="PHOSPHOPANTETHEINE ADENYLYLTRANSFERASE"/>
    <property type="match status" value="1"/>
</dbReference>
<dbReference type="Pfam" id="PF01467">
    <property type="entry name" value="CTP_transf_like"/>
    <property type="match status" value="1"/>
</dbReference>
<dbReference type="SUPFAM" id="SSF52374">
    <property type="entry name" value="Nucleotidylyl transferase"/>
    <property type="match status" value="1"/>
</dbReference>
<reference key="1">
    <citation type="journal article" date="2011" name="Stand. Genomic Sci.">
        <title>Complete genome sequence of the filamentous gliding predatory bacterium Herpetosiphon aurantiacus type strain (114-95(T)).</title>
        <authorList>
            <person name="Kiss H."/>
            <person name="Nett M."/>
            <person name="Domin N."/>
            <person name="Martin K."/>
            <person name="Maresca J.A."/>
            <person name="Copeland A."/>
            <person name="Lapidus A."/>
            <person name="Lucas S."/>
            <person name="Berry K.W."/>
            <person name="Glavina Del Rio T."/>
            <person name="Dalin E."/>
            <person name="Tice H."/>
            <person name="Pitluck S."/>
            <person name="Richardson P."/>
            <person name="Bruce D."/>
            <person name="Goodwin L."/>
            <person name="Han C."/>
            <person name="Detter J.C."/>
            <person name="Schmutz J."/>
            <person name="Brettin T."/>
            <person name="Land M."/>
            <person name="Hauser L."/>
            <person name="Kyrpides N.C."/>
            <person name="Ivanova N."/>
            <person name="Goeker M."/>
            <person name="Woyke T."/>
            <person name="Klenk H.P."/>
            <person name="Bryant D.A."/>
        </authorList>
    </citation>
    <scope>NUCLEOTIDE SEQUENCE [LARGE SCALE GENOMIC DNA]</scope>
    <source>
        <strain>ATCC 23779 / DSM 785 / 114-95</strain>
    </source>
</reference>
<gene>
    <name evidence="1" type="primary">nadD</name>
    <name type="ordered locus">Haur_2310</name>
</gene>
<comment type="function">
    <text evidence="1">Catalyzes the reversible adenylation of nicotinate mononucleotide (NaMN) to nicotinic acid adenine dinucleotide (NaAD).</text>
</comment>
<comment type="catalytic activity">
    <reaction evidence="1">
        <text>nicotinate beta-D-ribonucleotide + ATP + H(+) = deamido-NAD(+) + diphosphate</text>
        <dbReference type="Rhea" id="RHEA:22860"/>
        <dbReference type="ChEBI" id="CHEBI:15378"/>
        <dbReference type="ChEBI" id="CHEBI:30616"/>
        <dbReference type="ChEBI" id="CHEBI:33019"/>
        <dbReference type="ChEBI" id="CHEBI:57502"/>
        <dbReference type="ChEBI" id="CHEBI:58437"/>
        <dbReference type="EC" id="2.7.7.18"/>
    </reaction>
</comment>
<comment type="pathway">
    <text evidence="1">Cofactor biosynthesis; NAD(+) biosynthesis; deamido-NAD(+) from nicotinate D-ribonucleotide: step 1/1.</text>
</comment>
<comment type="similarity">
    <text evidence="1">Belongs to the NadD family.</text>
</comment>
<evidence type="ECO:0000255" key="1">
    <source>
        <dbReference type="HAMAP-Rule" id="MF_00244"/>
    </source>
</evidence>
<keyword id="KW-0067">ATP-binding</keyword>
<keyword id="KW-0520">NAD</keyword>
<keyword id="KW-0547">Nucleotide-binding</keyword>
<keyword id="KW-0548">Nucleotidyltransferase</keyword>
<keyword id="KW-0662">Pyridine nucleotide biosynthesis</keyword>
<keyword id="KW-0808">Transferase</keyword>
<feature type="chain" id="PRO_1000100780" description="Probable nicotinate-nucleotide adenylyltransferase">
    <location>
        <begin position="1"/>
        <end position="198"/>
    </location>
</feature>